<sequence length="321" mass="37183">MKNWLCQAVRGEPMIELNRIEELFDNQQFSLHELVLNELGVYVFVKNRRGEYLYANPLTLKLFETNAQSLLGKTDHDFFHDDQLSDILAADQQVFETRLSVVHEERAIAKSNGLVRIYRAVKHPILHRVTGEVIGLIGVSTDITDIVELREQLYQLANTDSLTQLCNRRKLWADFRAAFARAKRLRQPLSCISIDIDNFKLINDQFGHDKGDEVLCFLAKLFQSVISDHHFCGRVGGEEFIIVLENTHVETAFHLAEQIRQRFAEHPFFEQNEHIYLCAGVSSLHHGDHDIADIYRRSDQALYKAKRNGRNRCCIYRQSTE</sequence>
<gene>
    <name evidence="11" type="ordered locus">VC0395_0300</name>
    <name evidence="12" type="ORF">GG844_01425</name>
</gene>
<organism>
    <name type="scientific">Vibrio cholerae serotype O1 (strain ATCC 39541 / Classical Ogawa 395 / O395)</name>
    <dbReference type="NCBI Taxonomy" id="345073"/>
    <lineage>
        <taxon>Bacteria</taxon>
        <taxon>Pseudomonadati</taxon>
        <taxon>Pseudomonadota</taxon>
        <taxon>Gammaproteobacteria</taxon>
        <taxon>Vibrionales</taxon>
        <taxon>Vibrionaceae</taxon>
        <taxon>Vibrio</taxon>
    </lineage>
</organism>
<accession>A0A0H3AFM6</accession>
<dbReference type="EC" id="2.7.7.65" evidence="7 9"/>
<dbReference type="EMBL" id="CP000626">
    <property type="protein sequence ID" value="ABQ19213.1"/>
    <property type="molecule type" value="Genomic_DNA"/>
</dbReference>
<dbReference type="EMBL" id="CP045718">
    <property type="protein sequence ID" value="QGF29862.1"/>
    <property type="molecule type" value="Genomic_DNA"/>
</dbReference>
<dbReference type="PDB" id="6EIB">
    <property type="method" value="X-ray"/>
    <property type="resolution" value="1.94 A"/>
    <property type="chains" value="A/B/C/D=161-321"/>
</dbReference>
<dbReference type="PDBsum" id="6EIB"/>
<dbReference type="SMR" id="A0A0H3AFM6"/>
<dbReference type="KEGG" id="vco:VC0395_0300"/>
<dbReference type="KEGG" id="vcr:VC395_A0964"/>
<dbReference type="PATRIC" id="fig|345073.21.peg.3689"/>
<dbReference type="eggNOG" id="COG2199">
    <property type="taxonomic scope" value="Bacteria"/>
</dbReference>
<dbReference type="OrthoDB" id="73375at2"/>
<dbReference type="BRENDA" id="2.7.7.65">
    <property type="organism ID" value="15862"/>
</dbReference>
<dbReference type="Proteomes" id="UP000000249">
    <property type="component" value="Chromosome 1"/>
</dbReference>
<dbReference type="GO" id="GO:0005886">
    <property type="term" value="C:plasma membrane"/>
    <property type="evidence" value="ECO:0007669"/>
    <property type="project" value="TreeGrafter"/>
</dbReference>
<dbReference type="GO" id="GO:0052621">
    <property type="term" value="F:diguanylate cyclase activity"/>
    <property type="evidence" value="ECO:0007669"/>
    <property type="project" value="UniProtKB-EC"/>
</dbReference>
<dbReference type="GO" id="GO:0005525">
    <property type="term" value="F:GTP binding"/>
    <property type="evidence" value="ECO:0007669"/>
    <property type="project" value="UniProtKB-KW"/>
</dbReference>
<dbReference type="GO" id="GO:0046872">
    <property type="term" value="F:metal ion binding"/>
    <property type="evidence" value="ECO:0007669"/>
    <property type="project" value="UniProtKB-KW"/>
</dbReference>
<dbReference type="GO" id="GO:0043709">
    <property type="term" value="P:cell adhesion involved in single-species biofilm formation"/>
    <property type="evidence" value="ECO:0007669"/>
    <property type="project" value="TreeGrafter"/>
</dbReference>
<dbReference type="GO" id="GO:1902201">
    <property type="term" value="P:negative regulation of bacterial-type flagellum-dependent cell motility"/>
    <property type="evidence" value="ECO:0007669"/>
    <property type="project" value="TreeGrafter"/>
</dbReference>
<dbReference type="CDD" id="cd01949">
    <property type="entry name" value="GGDEF"/>
    <property type="match status" value="1"/>
</dbReference>
<dbReference type="CDD" id="cd00130">
    <property type="entry name" value="PAS"/>
    <property type="match status" value="1"/>
</dbReference>
<dbReference type="FunFam" id="3.30.70.270:FF:000001">
    <property type="entry name" value="Diguanylate cyclase domain protein"/>
    <property type="match status" value="1"/>
</dbReference>
<dbReference type="FunFam" id="3.30.450.20:FF:000210">
    <property type="entry name" value="Sensory box/GGDEF family protein"/>
    <property type="match status" value="1"/>
</dbReference>
<dbReference type="Gene3D" id="3.30.70.270">
    <property type="match status" value="1"/>
</dbReference>
<dbReference type="Gene3D" id="3.30.450.20">
    <property type="entry name" value="PAS domain"/>
    <property type="match status" value="1"/>
</dbReference>
<dbReference type="InterPro" id="IPR050469">
    <property type="entry name" value="Diguanylate_Cyclase"/>
</dbReference>
<dbReference type="InterPro" id="IPR000160">
    <property type="entry name" value="GGDEF_dom"/>
</dbReference>
<dbReference type="InterPro" id="IPR029787">
    <property type="entry name" value="Nucleotide_cyclase"/>
</dbReference>
<dbReference type="InterPro" id="IPR000014">
    <property type="entry name" value="PAS"/>
</dbReference>
<dbReference type="InterPro" id="IPR000700">
    <property type="entry name" value="PAS-assoc_C"/>
</dbReference>
<dbReference type="InterPro" id="IPR035965">
    <property type="entry name" value="PAS-like_dom_sf"/>
</dbReference>
<dbReference type="InterPro" id="IPR013656">
    <property type="entry name" value="PAS_4"/>
</dbReference>
<dbReference type="InterPro" id="IPR043128">
    <property type="entry name" value="Rev_trsase/Diguanyl_cyclase"/>
</dbReference>
<dbReference type="NCBIfam" id="TIGR00254">
    <property type="entry name" value="GGDEF"/>
    <property type="match status" value="1"/>
</dbReference>
<dbReference type="NCBIfam" id="TIGR00229">
    <property type="entry name" value="sensory_box"/>
    <property type="match status" value="1"/>
</dbReference>
<dbReference type="PANTHER" id="PTHR45138:SF9">
    <property type="entry name" value="DIGUANYLATE CYCLASE DGCM-RELATED"/>
    <property type="match status" value="1"/>
</dbReference>
<dbReference type="PANTHER" id="PTHR45138">
    <property type="entry name" value="REGULATORY COMPONENTS OF SENSORY TRANSDUCTION SYSTEM"/>
    <property type="match status" value="1"/>
</dbReference>
<dbReference type="Pfam" id="PF00990">
    <property type="entry name" value="GGDEF"/>
    <property type="match status" value="1"/>
</dbReference>
<dbReference type="Pfam" id="PF08448">
    <property type="entry name" value="PAS_4"/>
    <property type="match status" value="1"/>
</dbReference>
<dbReference type="SMART" id="SM00267">
    <property type="entry name" value="GGDEF"/>
    <property type="match status" value="1"/>
</dbReference>
<dbReference type="SMART" id="SM00091">
    <property type="entry name" value="PAS"/>
    <property type="match status" value="1"/>
</dbReference>
<dbReference type="SUPFAM" id="SSF55073">
    <property type="entry name" value="Nucleotide cyclase"/>
    <property type="match status" value="1"/>
</dbReference>
<dbReference type="SUPFAM" id="SSF55785">
    <property type="entry name" value="PYP-like sensor domain (PAS domain)"/>
    <property type="match status" value="1"/>
</dbReference>
<dbReference type="PROSITE" id="PS50887">
    <property type="entry name" value="GGDEF"/>
    <property type="match status" value="1"/>
</dbReference>
<dbReference type="PROSITE" id="PS50113">
    <property type="entry name" value="PAC"/>
    <property type="match status" value="1"/>
</dbReference>
<dbReference type="PROSITE" id="PS50112">
    <property type="entry name" value="PAS"/>
    <property type="match status" value="1"/>
</dbReference>
<protein>
    <recommendedName>
        <fullName evidence="10">Diguanylate cyclase</fullName>
        <ecNumber evidence="7 9">2.7.7.65</ecNumber>
    </recommendedName>
</protein>
<keyword id="KW-0002">3D-structure</keyword>
<keyword id="KW-0342">GTP-binding</keyword>
<keyword id="KW-0460">Magnesium</keyword>
<keyword id="KW-0479">Metal-binding</keyword>
<keyword id="KW-0547">Nucleotide-binding</keyword>
<keyword id="KW-0808">Transferase</keyword>
<evidence type="ECO:0000250" key="1">
    <source>
        <dbReference type="UniProtKB" id="P31129"/>
    </source>
</evidence>
<evidence type="ECO:0000255" key="2"/>
<evidence type="ECO:0000255" key="3">
    <source>
        <dbReference type="PROSITE-ProRule" id="PRU00095"/>
    </source>
</evidence>
<evidence type="ECO:0000255" key="4">
    <source>
        <dbReference type="PROSITE-ProRule" id="PRU00140"/>
    </source>
</evidence>
<evidence type="ECO:0000255" key="5">
    <source>
        <dbReference type="PROSITE-ProRule" id="PRU00141"/>
    </source>
</evidence>
<evidence type="ECO:0000269" key="6">
    <source>
    </source>
</evidence>
<evidence type="ECO:0000269" key="7">
    <source>
    </source>
</evidence>
<evidence type="ECO:0000269" key="8">
    <source>
    </source>
</evidence>
<evidence type="ECO:0000269" key="9">
    <source>
    </source>
</evidence>
<evidence type="ECO:0000305" key="10"/>
<evidence type="ECO:0000312" key="11">
    <source>
        <dbReference type="EMBL" id="ABQ19213.1"/>
    </source>
</evidence>
<evidence type="ECO:0000312" key="12">
    <source>
        <dbReference type="EMBL" id="QGF29862.1"/>
    </source>
</evidence>
<evidence type="ECO:0007744" key="13">
    <source>
        <dbReference type="PDB" id="6EIB"/>
    </source>
</evidence>
<evidence type="ECO:0007829" key="14">
    <source>
        <dbReference type="PDB" id="6EIB"/>
    </source>
</evidence>
<comment type="function">
    <text evidence="6 7">Involved in biofilm formation (PubMed:26728467, PubMed:28647124). Catalyzes the conversion of GTP to c-di-GMP (PubMed:28647124).</text>
</comment>
<comment type="catalytic activity">
    <reaction evidence="7 9">
        <text>2 GTP = 3',3'-c-di-GMP + 2 diphosphate</text>
        <dbReference type="Rhea" id="RHEA:24898"/>
        <dbReference type="ChEBI" id="CHEBI:33019"/>
        <dbReference type="ChEBI" id="CHEBI:37565"/>
        <dbReference type="ChEBI" id="CHEBI:58805"/>
        <dbReference type="EC" id="2.7.7.65"/>
    </reaction>
</comment>
<comment type="cofactor">
    <cofactor evidence="7">
        <name>Mg(2+)</name>
        <dbReference type="ChEBI" id="CHEBI:18420"/>
    </cofactor>
    <text evidence="1">Binds 1 Mg(2+) ion per monomer.</text>
</comment>
<comment type="domain">
    <text evidence="9">The disordered N-terminal region is not required for diguanylate cyclase activity.</text>
</comment>
<name>DGC_VIBC3</name>
<reference key="1">
    <citation type="submission" date="2007-03" db="EMBL/GenBank/DDBJ databases">
        <authorList>
            <person name="Heidelberg J."/>
        </authorList>
    </citation>
    <scope>NUCLEOTIDE SEQUENCE [LARGE SCALE GENOMIC DNA]</scope>
    <source>
        <strain>ATCC 39541 / Classical Ogawa 395 / O395</strain>
    </source>
</reference>
<reference key="2">
    <citation type="submission" date="2019-10" db="EMBL/GenBank/DDBJ databases">
        <authorList>
            <person name="Langlete P."/>
            <person name="Winther-Larsen H.C."/>
            <person name="Krabberoed A.K."/>
        </authorList>
    </citation>
    <scope>NUCLEOTIDE SEQUENCE [LARGE SCALE GENOMIC DNA]</scope>
    <source>
        <strain>ATCC 39541 / Classical Ogawa 395 / O395</strain>
    </source>
</reference>
<reference key="3">
    <citation type="journal article" date="2016" name="AMB Express">
        <title>Effect of site-directed mutagenesis at the GGEEF domain of the biofilm forming GGEEF protein from Vibrio cholerae.</title>
        <authorList>
            <person name="Chouhan O.P."/>
            <person name="Bandekar D."/>
            <person name="Hazra M."/>
            <person name="Baghudana A."/>
            <person name="Hazra S."/>
            <person name="Biswas S."/>
        </authorList>
    </citation>
    <scope>FUNCTION</scope>
    <scope>MUTAGENESIS OF GLY-237; GLU-238 AND GLU-239</scope>
    <source>
        <strain>ATCC 39541 / Classical Ogawa 395 / O395</strain>
    </source>
</reference>
<reference key="4">
    <citation type="journal article" date="2017" name="Microbiol. Res.">
        <title>Putative protein VC0395_0300 from Vibrio cholerae is a diguanylate cyclase with a role in biofilm formation.</title>
        <authorList>
            <person name="Bandekar D."/>
            <person name="Chouhan O.P."/>
            <person name="Mohapatra S."/>
            <person name="Hazra M."/>
            <person name="Hazra S."/>
            <person name="Biswas S."/>
        </authorList>
    </citation>
    <scope>FUNCTION</scope>
    <scope>CATALYTIC ACTIVITY</scope>
    <scope>COFACTOR</scope>
    <source>
        <strain>ATCC 39541 / Classical Ogawa 395 / O395</strain>
    </source>
</reference>
<reference key="5">
    <citation type="journal article" date="2018" name="Protein Pept. Lett.">
        <title>Subtle changes due to mutations in the GGDEF domain result in loss of biofilm forming activity in the VC0395_0300 protein from Vibrio cholerae, but no major change in the overall structure.</title>
        <authorList>
            <person name="Chouhan O.P."/>
            <person name="Biswas S."/>
        </authorList>
    </citation>
    <scope>MUTAGENESIS OF GLY-237 AND GLU-238</scope>
</reference>
<reference evidence="13" key="6">
    <citation type="journal article" date="2020" name="Biochem. Biophys. Res. Commun.">
        <title>Structure of the active GGEEF domain of a diguanylate cyclase from Vibrio cholerae.</title>
        <authorList>
            <person name="Chouhan O.P."/>
            <person name="Roske Y."/>
            <person name="Heinemann U."/>
            <person name="Biswas S."/>
        </authorList>
    </citation>
    <scope>X-RAY CRYSTALLOGRAPHY (1.94 ANGSTROMS) OF 161-321</scope>
    <scope>CATALYTIC ACTIVITY</scope>
    <scope>DOMAIN</scope>
</reference>
<feature type="chain" id="PRO_0000449415" description="Diguanylate cyclase">
    <location>
        <begin position="1"/>
        <end position="321"/>
    </location>
</feature>
<feature type="domain" description="PAS" evidence="4">
    <location>
        <begin position="28"/>
        <end position="98"/>
    </location>
</feature>
<feature type="domain" description="PAC" evidence="5">
    <location>
        <begin position="102"/>
        <end position="155"/>
    </location>
</feature>
<feature type="domain" description="GGDEF" evidence="3">
    <location>
        <begin position="187"/>
        <end position="318"/>
    </location>
</feature>
<feature type="active site" description="Proton acceptor" evidence="2">
    <location>
        <position position="238"/>
    </location>
</feature>
<feature type="binding site" evidence="1">
    <location>
        <position position="195"/>
    </location>
    <ligand>
        <name>Mg(2+)</name>
        <dbReference type="ChEBI" id="CHEBI:18420"/>
    </ligand>
</feature>
<feature type="binding site" evidence="1">
    <location>
        <position position="196"/>
    </location>
    <ligand>
        <name>Mg(2+)</name>
        <dbReference type="ChEBI" id="CHEBI:18420"/>
    </ligand>
</feature>
<feature type="binding site" evidence="1">
    <location>
        <position position="238"/>
    </location>
    <ligand>
        <name>Mg(2+)</name>
        <dbReference type="ChEBI" id="CHEBI:18420"/>
    </ligand>
</feature>
<feature type="mutagenesis site" description="3-fold decrease in biofilm formation. 60% decrease in diguanylate cyclase activity. Does not affect the overall structure." evidence="6 8">
    <original>G</original>
    <variation>R</variation>
    <location>
        <position position="237"/>
    </location>
</feature>
<feature type="mutagenesis site" description="2-fold decrease in biofilm formation. 50% decrease in diguanylate cyclase activity. Does not affect the overall structure." evidence="6 8">
    <original>E</original>
    <variation>K</variation>
    <location>
        <position position="238"/>
    </location>
</feature>
<feature type="mutagenesis site" description="3-fold decrease in biofilm formation." evidence="6">
    <original>E</original>
    <variation>K</variation>
    <location>
        <position position="239"/>
    </location>
</feature>
<feature type="helix" evidence="14">
    <location>
        <begin position="162"/>
        <end position="165"/>
    </location>
</feature>
<feature type="helix" evidence="14">
    <location>
        <begin position="168"/>
        <end position="185"/>
    </location>
</feature>
<feature type="strand" evidence="14">
    <location>
        <begin position="189"/>
        <end position="196"/>
    </location>
</feature>
<feature type="helix" evidence="14">
    <location>
        <begin position="199"/>
        <end position="206"/>
    </location>
</feature>
<feature type="helix" evidence="14">
    <location>
        <begin position="208"/>
        <end position="225"/>
    </location>
</feature>
<feature type="strand" evidence="14">
    <location>
        <begin position="231"/>
        <end position="234"/>
    </location>
</feature>
<feature type="strand" evidence="14">
    <location>
        <begin position="236"/>
        <end position="245"/>
    </location>
</feature>
<feature type="helix" evidence="14">
    <location>
        <begin position="249"/>
        <end position="265"/>
    </location>
</feature>
<feature type="turn" evidence="14">
    <location>
        <begin position="269"/>
        <end position="272"/>
    </location>
</feature>
<feature type="strand" evidence="14">
    <location>
        <begin position="277"/>
        <end position="283"/>
    </location>
</feature>
<feature type="helix" evidence="14">
    <location>
        <begin position="291"/>
        <end position="306"/>
    </location>
</feature>
<feature type="strand" evidence="14">
    <location>
        <begin position="310"/>
        <end position="315"/>
    </location>
</feature>
<proteinExistence type="evidence at protein level"/>